<reference key="1">
    <citation type="journal article" date="2009" name="PLoS ONE">
        <title>Non mycobacterial virulence genes in the genome of the emerging pathogen Mycobacterium abscessus.</title>
        <authorList>
            <person name="Ripoll F."/>
            <person name="Pasek S."/>
            <person name="Schenowitz C."/>
            <person name="Dossat C."/>
            <person name="Barbe V."/>
            <person name="Rottman M."/>
            <person name="Macheras E."/>
            <person name="Heym B."/>
            <person name="Herrmann J.L."/>
            <person name="Daffe M."/>
            <person name="Brosch R."/>
            <person name="Risler J.L."/>
            <person name="Gaillard J.L."/>
        </authorList>
    </citation>
    <scope>NUCLEOTIDE SEQUENCE [LARGE SCALE GENOMIC DNA]</scope>
    <source>
        <strain>ATCC 19977 / DSM 44196 / CCUG 20993 / CIP 104536 / JCM 13569 / NCTC 13031 / TMC 1543 / L948</strain>
    </source>
</reference>
<protein>
    <recommendedName>
        <fullName evidence="1">Ribosome maturation factor RimM</fullName>
    </recommendedName>
</protein>
<proteinExistence type="inferred from homology"/>
<accession>B1MDI4</accession>
<feature type="chain" id="PRO_1000089508" description="Ribosome maturation factor RimM">
    <location>
        <begin position="1"/>
        <end position="173"/>
    </location>
</feature>
<feature type="domain" description="PRC barrel" evidence="1">
    <location>
        <begin position="95"/>
        <end position="169"/>
    </location>
</feature>
<organism>
    <name type="scientific">Mycobacteroides abscessus (strain ATCC 19977 / DSM 44196 / CCUG 20993 / CIP 104536 / JCM 13569 / NCTC 13031 / TMC 1543 / L948)</name>
    <name type="common">Mycobacterium abscessus</name>
    <dbReference type="NCBI Taxonomy" id="561007"/>
    <lineage>
        <taxon>Bacteria</taxon>
        <taxon>Bacillati</taxon>
        <taxon>Actinomycetota</taxon>
        <taxon>Actinomycetes</taxon>
        <taxon>Mycobacteriales</taxon>
        <taxon>Mycobacteriaceae</taxon>
        <taxon>Mycobacteroides</taxon>
        <taxon>Mycobacteroides abscessus</taxon>
    </lineage>
</organism>
<dbReference type="EMBL" id="CU458896">
    <property type="protein sequence ID" value="CAM63303.1"/>
    <property type="molecule type" value="Genomic_DNA"/>
</dbReference>
<dbReference type="RefSeq" id="WP_005111677.1">
    <property type="nucleotide sequence ID" value="NZ_MLCG01000001.1"/>
</dbReference>
<dbReference type="SMR" id="B1MDI4"/>
<dbReference type="GeneID" id="93380158"/>
<dbReference type="KEGG" id="mab:MAB_3227c"/>
<dbReference type="Proteomes" id="UP000007137">
    <property type="component" value="Chromosome"/>
</dbReference>
<dbReference type="GO" id="GO:0005737">
    <property type="term" value="C:cytoplasm"/>
    <property type="evidence" value="ECO:0007669"/>
    <property type="project" value="UniProtKB-SubCell"/>
</dbReference>
<dbReference type="GO" id="GO:0005840">
    <property type="term" value="C:ribosome"/>
    <property type="evidence" value="ECO:0007669"/>
    <property type="project" value="InterPro"/>
</dbReference>
<dbReference type="GO" id="GO:0043022">
    <property type="term" value="F:ribosome binding"/>
    <property type="evidence" value="ECO:0007669"/>
    <property type="project" value="InterPro"/>
</dbReference>
<dbReference type="GO" id="GO:0042274">
    <property type="term" value="P:ribosomal small subunit biogenesis"/>
    <property type="evidence" value="ECO:0007669"/>
    <property type="project" value="UniProtKB-UniRule"/>
</dbReference>
<dbReference type="GO" id="GO:0006364">
    <property type="term" value="P:rRNA processing"/>
    <property type="evidence" value="ECO:0007669"/>
    <property type="project" value="UniProtKB-UniRule"/>
</dbReference>
<dbReference type="Gene3D" id="2.30.30.240">
    <property type="entry name" value="PRC-barrel domain"/>
    <property type="match status" value="1"/>
</dbReference>
<dbReference type="Gene3D" id="2.40.30.60">
    <property type="entry name" value="RimM"/>
    <property type="match status" value="1"/>
</dbReference>
<dbReference type="HAMAP" id="MF_00014">
    <property type="entry name" value="Ribosome_mat_RimM"/>
    <property type="match status" value="1"/>
</dbReference>
<dbReference type="InterPro" id="IPR011033">
    <property type="entry name" value="PRC_barrel-like_sf"/>
</dbReference>
<dbReference type="InterPro" id="IPR056792">
    <property type="entry name" value="PRC_RimM"/>
</dbReference>
<dbReference type="InterPro" id="IPR011961">
    <property type="entry name" value="RimM"/>
</dbReference>
<dbReference type="InterPro" id="IPR002676">
    <property type="entry name" value="RimM_N"/>
</dbReference>
<dbReference type="InterPro" id="IPR036976">
    <property type="entry name" value="RimM_N_sf"/>
</dbReference>
<dbReference type="InterPro" id="IPR009000">
    <property type="entry name" value="Transl_B-barrel_sf"/>
</dbReference>
<dbReference type="NCBIfam" id="TIGR02273">
    <property type="entry name" value="16S_RimM"/>
    <property type="match status" value="1"/>
</dbReference>
<dbReference type="PANTHER" id="PTHR33692">
    <property type="entry name" value="RIBOSOME MATURATION FACTOR RIMM"/>
    <property type="match status" value="1"/>
</dbReference>
<dbReference type="PANTHER" id="PTHR33692:SF1">
    <property type="entry name" value="RIBOSOME MATURATION FACTOR RIMM"/>
    <property type="match status" value="1"/>
</dbReference>
<dbReference type="Pfam" id="PF24986">
    <property type="entry name" value="PRC_RimM"/>
    <property type="match status" value="1"/>
</dbReference>
<dbReference type="Pfam" id="PF01782">
    <property type="entry name" value="RimM"/>
    <property type="match status" value="1"/>
</dbReference>
<dbReference type="SUPFAM" id="SSF50346">
    <property type="entry name" value="PRC-barrel domain"/>
    <property type="match status" value="1"/>
</dbReference>
<dbReference type="SUPFAM" id="SSF50447">
    <property type="entry name" value="Translation proteins"/>
    <property type="match status" value="1"/>
</dbReference>
<comment type="function">
    <text evidence="1">An accessory protein needed during the final step in the assembly of 30S ribosomal subunit, possibly for assembly of the head region. Essential for efficient processing of 16S rRNA. May be needed both before and after RbfA during the maturation of 16S rRNA. It has affinity for free ribosomal 30S subunits but not for 70S ribosomes.</text>
</comment>
<comment type="subunit">
    <text evidence="1">Binds ribosomal protein uS19.</text>
</comment>
<comment type="subcellular location">
    <subcellularLocation>
        <location evidence="1">Cytoplasm</location>
    </subcellularLocation>
</comment>
<comment type="domain">
    <text evidence="1">The PRC barrel domain binds ribosomal protein uS19.</text>
</comment>
<comment type="similarity">
    <text evidence="1">Belongs to the RimM family.</text>
</comment>
<name>RIMM_MYCA9</name>
<keyword id="KW-0143">Chaperone</keyword>
<keyword id="KW-0963">Cytoplasm</keyword>
<keyword id="KW-1185">Reference proteome</keyword>
<keyword id="KW-0690">Ribosome biogenesis</keyword>
<keyword id="KW-0698">rRNA processing</keyword>
<gene>
    <name evidence="1" type="primary">rimM</name>
    <name type="ordered locus">MAB_3227c</name>
</gene>
<evidence type="ECO:0000255" key="1">
    <source>
        <dbReference type="HAMAP-Rule" id="MF_00014"/>
    </source>
</evidence>
<sequence>MELVVGRIARAHGVTGELSVEVRTDDPDERFAVGSVLTGRLPRGGGSRRFTVESVREHSGRLLIRFAGVSDRDAADALRGTLFMVDTTDLPPIEDPDEFYDHQLEGLAVRTLDGAAVGTVSEVLHTPGGELLSVRGSERREILVPFVSAIVTSISLADKVIEIDPPEGLLDLS</sequence>